<comment type="function">
    <text evidence="1">Catalyzes the transfer of the phosphoribosyl group of 5-phosphorylribose-1-pyrophosphate (PRPP) to anthranilate to yield N-(5'-phosphoribosyl)-anthranilate (PRA).</text>
</comment>
<comment type="catalytic activity">
    <reaction evidence="1">
        <text>N-(5-phospho-beta-D-ribosyl)anthranilate + diphosphate = 5-phospho-alpha-D-ribose 1-diphosphate + anthranilate</text>
        <dbReference type="Rhea" id="RHEA:11768"/>
        <dbReference type="ChEBI" id="CHEBI:16567"/>
        <dbReference type="ChEBI" id="CHEBI:18277"/>
        <dbReference type="ChEBI" id="CHEBI:33019"/>
        <dbReference type="ChEBI" id="CHEBI:58017"/>
        <dbReference type="EC" id="2.4.2.18"/>
    </reaction>
</comment>
<comment type="cofactor">
    <cofactor evidence="1">
        <name>Mg(2+)</name>
        <dbReference type="ChEBI" id="CHEBI:18420"/>
    </cofactor>
    <text evidence="1">Binds 2 magnesium ions per monomer.</text>
</comment>
<comment type="pathway">
    <text evidence="1">Amino-acid biosynthesis; L-tryptophan biosynthesis; L-tryptophan from chorismate: step 2/5.</text>
</comment>
<comment type="subunit">
    <text evidence="1">Homodimer.</text>
</comment>
<comment type="similarity">
    <text evidence="1">Belongs to the anthranilate phosphoribosyltransferase family.</text>
</comment>
<gene>
    <name evidence="1" type="primary">trpD</name>
    <name type="ordered locus">GWCH70_2142</name>
</gene>
<proteinExistence type="inferred from homology"/>
<feature type="chain" id="PRO_1000204185" description="Anthranilate phosphoribosyltransferase">
    <location>
        <begin position="1"/>
        <end position="339"/>
    </location>
</feature>
<feature type="binding site" evidence="1">
    <location>
        <position position="79"/>
    </location>
    <ligand>
        <name>5-phospho-alpha-D-ribose 1-diphosphate</name>
        <dbReference type="ChEBI" id="CHEBI:58017"/>
    </ligand>
</feature>
<feature type="binding site" evidence="1">
    <location>
        <position position="79"/>
    </location>
    <ligand>
        <name>anthranilate</name>
        <dbReference type="ChEBI" id="CHEBI:16567"/>
        <label>1</label>
    </ligand>
</feature>
<feature type="binding site" evidence="1">
    <location>
        <begin position="82"/>
        <end position="83"/>
    </location>
    <ligand>
        <name>5-phospho-alpha-D-ribose 1-diphosphate</name>
        <dbReference type="ChEBI" id="CHEBI:58017"/>
    </ligand>
</feature>
<feature type="binding site" evidence="1">
    <location>
        <position position="87"/>
    </location>
    <ligand>
        <name>5-phospho-alpha-D-ribose 1-diphosphate</name>
        <dbReference type="ChEBI" id="CHEBI:58017"/>
    </ligand>
</feature>
<feature type="binding site" evidence="1">
    <location>
        <begin position="89"/>
        <end position="92"/>
    </location>
    <ligand>
        <name>5-phospho-alpha-D-ribose 1-diphosphate</name>
        <dbReference type="ChEBI" id="CHEBI:58017"/>
    </ligand>
</feature>
<feature type="binding site" evidence="1">
    <location>
        <position position="91"/>
    </location>
    <ligand>
        <name>Mg(2+)</name>
        <dbReference type="ChEBI" id="CHEBI:18420"/>
        <label>1</label>
    </ligand>
</feature>
<feature type="binding site" evidence="1">
    <location>
        <begin position="107"/>
        <end position="115"/>
    </location>
    <ligand>
        <name>5-phospho-alpha-D-ribose 1-diphosphate</name>
        <dbReference type="ChEBI" id="CHEBI:58017"/>
    </ligand>
</feature>
<feature type="binding site" evidence="1">
    <location>
        <position position="110"/>
    </location>
    <ligand>
        <name>anthranilate</name>
        <dbReference type="ChEBI" id="CHEBI:16567"/>
        <label>1</label>
    </ligand>
</feature>
<feature type="binding site" evidence="1">
    <location>
        <position position="119"/>
    </location>
    <ligand>
        <name>5-phospho-alpha-D-ribose 1-diphosphate</name>
        <dbReference type="ChEBI" id="CHEBI:58017"/>
    </ligand>
</feature>
<feature type="binding site" evidence="1">
    <location>
        <position position="165"/>
    </location>
    <ligand>
        <name>anthranilate</name>
        <dbReference type="ChEBI" id="CHEBI:16567"/>
        <label>2</label>
    </ligand>
</feature>
<feature type="binding site" evidence="1">
    <location>
        <position position="224"/>
    </location>
    <ligand>
        <name>Mg(2+)</name>
        <dbReference type="ChEBI" id="CHEBI:18420"/>
        <label>2</label>
    </ligand>
</feature>
<feature type="binding site" evidence="1">
    <location>
        <position position="225"/>
    </location>
    <ligand>
        <name>Mg(2+)</name>
        <dbReference type="ChEBI" id="CHEBI:18420"/>
        <label>1</label>
    </ligand>
</feature>
<feature type="binding site" evidence="1">
    <location>
        <position position="225"/>
    </location>
    <ligand>
        <name>Mg(2+)</name>
        <dbReference type="ChEBI" id="CHEBI:18420"/>
        <label>2</label>
    </ligand>
</feature>
<evidence type="ECO:0000255" key="1">
    <source>
        <dbReference type="HAMAP-Rule" id="MF_00211"/>
    </source>
</evidence>
<reference key="1">
    <citation type="submission" date="2009-06" db="EMBL/GenBank/DDBJ databases">
        <title>Complete sequence of chromosome of Geopacillus sp. WCH70.</title>
        <authorList>
            <consortium name="US DOE Joint Genome Institute"/>
            <person name="Lucas S."/>
            <person name="Copeland A."/>
            <person name="Lapidus A."/>
            <person name="Glavina del Rio T."/>
            <person name="Dalin E."/>
            <person name="Tice H."/>
            <person name="Bruce D."/>
            <person name="Goodwin L."/>
            <person name="Pitluck S."/>
            <person name="Chertkov O."/>
            <person name="Brettin T."/>
            <person name="Detter J.C."/>
            <person name="Han C."/>
            <person name="Larimer F."/>
            <person name="Land M."/>
            <person name="Hauser L."/>
            <person name="Kyrpides N."/>
            <person name="Mikhailova N."/>
            <person name="Brumm P."/>
            <person name="Mead D.A."/>
            <person name="Richardson P."/>
        </authorList>
    </citation>
    <scope>NUCLEOTIDE SEQUENCE [LARGE SCALE GENOMIC DNA]</scope>
    <source>
        <strain>WCH70</strain>
    </source>
</reference>
<dbReference type="EC" id="2.4.2.18" evidence="1"/>
<dbReference type="EMBL" id="CP001638">
    <property type="protein sequence ID" value="ACS24852.1"/>
    <property type="molecule type" value="Genomic_DNA"/>
</dbReference>
<dbReference type="SMR" id="C5D3D7"/>
<dbReference type="STRING" id="471223.GWCH70_2142"/>
<dbReference type="KEGG" id="gwc:GWCH70_2142"/>
<dbReference type="eggNOG" id="COG0547">
    <property type="taxonomic scope" value="Bacteria"/>
</dbReference>
<dbReference type="HOGENOM" id="CLU_034315_2_1_9"/>
<dbReference type="OrthoDB" id="9806430at2"/>
<dbReference type="UniPathway" id="UPA00035">
    <property type="reaction ID" value="UER00041"/>
</dbReference>
<dbReference type="GO" id="GO:0005829">
    <property type="term" value="C:cytosol"/>
    <property type="evidence" value="ECO:0007669"/>
    <property type="project" value="TreeGrafter"/>
</dbReference>
<dbReference type="GO" id="GO:0004048">
    <property type="term" value="F:anthranilate phosphoribosyltransferase activity"/>
    <property type="evidence" value="ECO:0007669"/>
    <property type="project" value="UniProtKB-UniRule"/>
</dbReference>
<dbReference type="GO" id="GO:0000287">
    <property type="term" value="F:magnesium ion binding"/>
    <property type="evidence" value="ECO:0007669"/>
    <property type="project" value="UniProtKB-UniRule"/>
</dbReference>
<dbReference type="GO" id="GO:0000162">
    <property type="term" value="P:L-tryptophan biosynthetic process"/>
    <property type="evidence" value="ECO:0007669"/>
    <property type="project" value="UniProtKB-UniRule"/>
</dbReference>
<dbReference type="FunFam" id="3.40.1030.10:FF:000002">
    <property type="entry name" value="Anthranilate phosphoribosyltransferase"/>
    <property type="match status" value="1"/>
</dbReference>
<dbReference type="Gene3D" id="3.40.1030.10">
    <property type="entry name" value="Nucleoside phosphorylase/phosphoribosyltransferase catalytic domain"/>
    <property type="match status" value="1"/>
</dbReference>
<dbReference type="Gene3D" id="1.20.970.10">
    <property type="entry name" value="Transferase, Pyrimidine Nucleoside Phosphorylase, Chain C"/>
    <property type="match status" value="1"/>
</dbReference>
<dbReference type="HAMAP" id="MF_00211">
    <property type="entry name" value="TrpD"/>
    <property type="match status" value="1"/>
</dbReference>
<dbReference type="InterPro" id="IPR005940">
    <property type="entry name" value="Anthranilate_Pribosyl_Tfrase"/>
</dbReference>
<dbReference type="InterPro" id="IPR000312">
    <property type="entry name" value="Glycosyl_Trfase_fam3"/>
</dbReference>
<dbReference type="InterPro" id="IPR017459">
    <property type="entry name" value="Glycosyl_Trfase_fam3_N_dom"/>
</dbReference>
<dbReference type="InterPro" id="IPR036320">
    <property type="entry name" value="Glycosyl_Trfase_fam3_N_dom_sf"/>
</dbReference>
<dbReference type="InterPro" id="IPR035902">
    <property type="entry name" value="Nuc_phospho_transferase"/>
</dbReference>
<dbReference type="NCBIfam" id="TIGR01245">
    <property type="entry name" value="trpD"/>
    <property type="match status" value="1"/>
</dbReference>
<dbReference type="PANTHER" id="PTHR43285">
    <property type="entry name" value="ANTHRANILATE PHOSPHORIBOSYLTRANSFERASE"/>
    <property type="match status" value="1"/>
</dbReference>
<dbReference type="PANTHER" id="PTHR43285:SF2">
    <property type="entry name" value="ANTHRANILATE PHOSPHORIBOSYLTRANSFERASE"/>
    <property type="match status" value="1"/>
</dbReference>
<dbReference type="Pfam" id="PF02885">
    <property type="entry name" value="Glycos_trans_3N"/>
    <property type="match status" value="1"/>
</dbReference>
<dbReference type="Pfam" id="PF00591">
    <property type="entry name" value="Glycos_transf_3"/>
    <property type="match status" value="1"/>
</dbReference>
<dbReference type="SUPFAM" id="SSF52418">
    <property type="entry name" value="Nucleoside phosphorylase/phosphoribosyltransferase catalytic domain"/>
    <property type="match status" value="1"/>
</dbReference>
<dbReference type="SUPFAM" id="SSF47648">
    <property type="entry name" value="Nucleoside phosphorylase/phosphoribosyltransferase N-terminal domain"/>
    <property type="match status" value="1"/>
</dbReference>
<keyword id="KW-0028">Amino-acid biosynthesis</keyword>
<keyword id="KW-0057">Aromatic amino acid biosynthesis</keyword>
<keyword id="KW-0328">Glycosyltransferase</keyword>
<keyword id="KW-0460">Magnesium</keyword>
<keyword id="KW-0479">Metal-binding</keyword>
<keyword id="KW-0808">Transferase</keyword>
<keyword id="KW-0822">Tryptophan biosynthesis</keyword>
<name>TRPD_GEOSW</name>
<accession>C5D3D7</accession>
<protein>
    <recommendedName>
        <fullName evidence="1">Anthranilate phosphoribosyltransferase</fullName>
        <ecNumber evidence="1">2.4.2.18</ecNumber>
    </recommendedName>
</protein>
<sequence length="339" mass="37016">MFKQLLAKCIEGYTLTEEEAYEAMMMIMSGEASASQIASFLSILRLRGETVDELTGLVKAMRNRMMTLDYEEEAIDTCGTGGDGASTFNISTAAAIVVSSLGVKVAKHGNRAVSSKSGSADVLEALHIDIQATPEEAKRALKTKGLAFLFAPLYHSAMKYAALPRKEIGFRTVFNLIGPLSNPARCKRQVIGVYSTQYAEKLAETLHRLGSEHVLLVTGKDGLDECSISAETDVVELKHGEIRRFTIAPEQYGLARGKLEHVQVRTVQQSAELLKAVLEGRANESAINIVILNAGVALYAAGKAATIREGVEMAKEAMMTKKAYEQFERLRMKEVEKYA</sequence>
<organism>
    <name type="scientific">Geobacillus sp. (strain WCH70)</name>
    <dbReference type="NCBI Taxonomy" id="471223"/>
    <lineage>
        <taxon>Bacteria</taxon>
        <taxon>Bacillati</taxon>
        <taxon>Bacillota</taxon>
        <taxon>Bacilli</taxon>
        <taxon>Bacillales</taxon>
        <taxon>Anoxybacillaceae</taxon>
        <taxon>Geobacillus</taxon>
    </lineage>
</organism>